<proteinExistence type="inferred from homology"/>
<sequence length="226" mass="23895">MREPLDPLGPALAQASLYLCTDARRERGDLAEFADAALAGGVDLIQLRDKGSAGERRFGPLEAREELAALEILAEAARRHGALLAVNDRADIALAAGADVLHLGQDDLPLPVARRIIGPSPLIGRSTHDSAQVAAAVAEEVDYFCVGPCWPTPTKPGREAPGLGLVREVASRATEKPWFAIGGIDEARLPEVLDAGARRIVVVRAITAADDPKAAARRLKDALVSR</sequence>
<comment type="function">
    <text evidence="1">Condenses 4-methyl-5-(beta-hydroxyethyl)thiazole monophosphate (THZ-P) and 2-methyl-4-amino-5-hydroxymethyl pyrimidine pyrophosphate (HMP-PP) to form thiamine monophosphate (TMP).</text>
</comment>
<comment type="catalytic activity">
    <reaction evidence="1">
        <text>2-[(2R,5Z)-2-carboxy-4-methylthiazol-5(2H)-ylidene]ethyl phosphate + 4-amino-2-methyl-5-(diphosphooxymethyl)pyrimidine + 2 H(+) = thiamine phosphate + CO2 + diphosphate</text>
        <dbReference type="Rhea" id="RHEA:47844"/>
        <dbReference type="ChEBI" id="CHEBI:15378"/>
        <dbReference type="ChEBI" id="CHEBI:16526"/>
        <dbReference type="ChEBI" id="CHEBI:33019"/>
        <dbReference type="ChEBI" id="CHEBI:37575"/>
        <dbReference type="ChEBI" id="CHEBI:57841"/>
        <dbReference type="ChEBI" id="CHEBI:62899"/>
        <dbReference type="EC" id="2.5.1.3"/>
    </reaction>
</comment>
<comment type="catalytic activity">
    <reaction evidence="1">
        <text>2-(2-carboxy-4-methylthiazol-5-yl)ethyl phosphate + 4-amino-2-methyl-5-(diphosphooxymethyl)pyrimidine + 2 H(+) = thiamine phosphate + CO2 + diphosphate</text>
        <dbReference type="Rhea" id="RHEA:47848"/>
        <dbReference type="ChEBI" id="CHEBI:15378"/>
        <dbReference type="ChEBI" id="CHEBI:16526"/>
        <dbReference type="ChEBI" id="CHEBI:33019"/>
        <dbReference type="ChEBI" id="CHEBI:37575"/>
        <dbReference type="ChEBI" id="CHEBI:57841"/>
        <dbReference type="ChEBI" id="CHEBI:62890"/>
        <dbReference type="EC" id="2.5.1.3"/>
    </reaction>
</comment>
<comment type="catalytic activity">
    <reaction evidence="1">
        <text>4-methyl-5-(2-phosphooxyethyl)-thiazole + 4-amino-2-methyl-5-(diphosphooxymethyl)pyrimidine + H(+) = thiamine phosphate + diphosphate</text>
        <dbReference type="Rhea" id="RHEA:22328"/>
        <dbReference type="ChEBI" id="CHEBI:15378"/>
        <dbReference type="ChEBI" id="CHEBI:33019"/>
        <dbReference type="ChEBI" id="CHEBI:37575"/>
        <dbReference type="ChEBI" id="CHEBI:57841"/>
        <dbReference type="ChEBI" id="CHEBI:58296"/>
        <dbReference type="EC" id="2.5.1.3"/>
    </reaction>
</comment>
<comment type="cofactor">
    <cofactor evidence="1">
        <name>Mg(2+)</name>
        <dbReference type="ChEBI" id="CHEBI:18420"/>
    </cofactor>
    <text evidence="1">Binds 1 Mg(2+) ion per subunit.</text>
</comment>
<comment type="pathway">
    <text evidence="1">Cofactor biosynthesis; thiamine diphosphate biosynthesis; thiamine phosphate from 4-amino-2-methyl-5-diphosphomethylpyrimidine and 4-methyl-5-(2-phosphoethyl)-thiazole: step 1/1.</text>
</comment>
<comment type="similarity">
    <text evidence="1">Belongs to the thiamine-phosphate synthase family.</text>
</comment>
<accession>A1UAB4</accession>
<gene>
    <name evidence="1" type="primary">thiE</name>
    <name type="ordered locus">Mkms_0556</name>
</gene>
<protein>
    <recommendedName>
        <fullName evidence="1">Thiamine-phosphate synthase</fullName>
        <shortName evidence="1">TP synthase</shortName>
        <shortName evidence="1">TPS</shortName>
        <ecNumber evidence="1">2.5.1.3</ecNumber>
    </recommendedName>
    <alternativeName>
        <fullName evidence="1">Thiamine-phosphate pyrophosphorylase</fullName>
        <shortName evidence="1">TMP pyrophosphorylase</shortName>
        <shortName evidence="1">TMP-PPase</shortName>
    </alternativeName>
</protein>
<dbReference type="EC" id="2.5.1.3" evidence="1"/>
<dbReference type="EMBL" id="CP000518">
    <property type="protein sequence ID" value="ABL89772.1"/>
    <property type="molecule type" value="Genomic_DNA"/>
</dbReference>
<dbReference type="SMR" id="A1UAB4"/>
<dbReference type="STRING" id="189918.Mkms_0556"/>
<dbReference type="KEGG" id="mkm:Mkms_0556"/>
<dbReference type="HOGENOM" id="CLU_018272_3_0_11"/>
<dbReference type="OrthoDB" id="3243336at2"/>
<dbReference type="UniPathway" id="UPA00060">
    <property type="reaction ID" value="UER00141"/>
</dbReference>
<dbReference type="GO" id="GO:0005737">
    <property type="term" value="C:cytoplasm"/>
    <property type="evidence" value="ECO:0007669"/>
    <property type="project" value="TreeGrafter"/>
</dbReference>
<dbReference type="GO" id="GO:0000287">
    <property type="term" value="F:magnesium ion binding"/>
    <property type="evidence" value="ECO:0007669"/>
    <property type="project" value="UniProtKB-UniRule"/>
</dbReference>
<dbReference type="GO" id="GO:0004789">
    <property type="term" value="F:thiamine-phosphate diphosphorylase activity"/>
    <property type="evidence" value="ECO:0007669"/>
    <property type="project" value="UniProtKB-UniRule"/>
</dbReference>
<dbReference type="GO" id="GO:0009228">
    <property type="term" value="P:thiamine biosynthetic process"/>
    <property type="evidence" value="ECO:0007669"/>
    <property type="project" value="UniProtKB-KW"/>
</dbReference>
<dbReference type="GO" id="GO:0009229">
    <property type="term" value="P:thiamine diphosphate biosynthetic process"/>
    <property type="evidence" value="ECO:0007669"/>
    <property type="project" value="UniProtKB-UniRule"/>
</dbReference>
<dbReference type="CDD" id="cd00564">
    <property type="entry name" value="TMP_TenI"/>
    <property type="match status" value="1"/>
</dbReference>
<dbReference type="FunFam" id="3.20.20.70:FF:000178">
    <property type="entry name" value="Thiamine-phosphate synthase"/>
    <property type="match status" value="1"/>
</dbReference>
<dbReference type="Gene3D" id="3.20.20.70">
    <property type="entry name" value="Aldolase class I"/>
    <property type="match status" value="1"/>
</dbReference>
<dbReference type="HAMAP" id="MF_00097">
    <property type="entry name" value="TMP_synthase"/>
    <property type="match status" value="1"/>
</dbReference>
<dbReference type="InterPro" id="IPR013785">
    <property type="entry name" value="Aldolase_TIM"/>
</dbReference>
<dbReference type="InterPro" id="IPR036206">
    <property type="entry name" value="ThiamineP_synth_sf"/>
</dbReference>
<dbReference type="InterPro" id="IPR022998">
    <property type="entry name" value="ThiamineP_synth_TenI"/>
</dbReference>
<dbReference type="InterPro" id="IPR034291">
    <property type="entry name" value="TMP_synthase"/>
</dbReference>
<dbReference type="NCBIfam" id="TIGR00693">
    <property type="entry name" value="thiE"/>
    <property type="match status" value="1"/>
</dbReference>
<dbReference type="PANTHER" id="PTHR20857">
    <property type="entry name" value="THIAMINE-PHOSPHATE PYROPHOSPHORYLASE"/>
    <property type="match status" value="1"/>
</dbReference>
<dbReference type="PANTHER" id="PTHR20857:SF15">
    <property type="entry name" value="THIAMINE-PHOSPHATE SYNTHASE"/>
    <property type="match status" value="1"/>
</dbReference>
<dbReference type="Pfam" id="PF02581">
    <property type="entry name" value="TMP-TENI"/>
    <property type="match status" value="1"/>
</dbReference>
<dbReference type="SUPFAM" id="SSF51391">
    <property type="entry name" value="Thiamin phosphate synthase"/>
    <property type="match status" value="1"/>
</dbReference>
<feature type="chain" id="PRO_0000336410" description="Thiamine-phosphate synthase">
    <location>
        <begin position="1"/>
        <end position="226"/>
    </location>
</feature>
<feature type="binding site" evidence="1">
    <location>
        <begin position="46"/>
        <end position="50"/>
    </location>
    <ligand>
        <name>4-amino-2-methyl-5-(diphosphooxymethyl)pyrimidine</name>
        <dbReference type="ChEBI" id="CHEBI:57841"/>
    </ligand>
</feature>
<feature type="binding site" evidence="1">
    <location>
        <position position="87"/>
    </location>
    <ligand>
        <name>4-amino-2-methyl-5-(diphosphooxymethyl)pyrimidine</name>
        <dbReference type="ChEBI" id="CHEBI:57841"/>
    </ligand>
</feature>
<feature type="binding site" evidence="1">
    <location>
        <position position="88"/>
    </location>
    <ligand>
        <name>Mg(2+)</name>
        <dbReference type="ChEBI" id="CHEBI:18420"/>
    </ligand>
</feature>
<feature type="binding site" evidence="1">
    <location>
        <position position="107"/>
    </location>
    <ligand>
        <name>Mg(2+)</name>
        <dbReference type="ChEBI" id="CHEBI:18420"/>
    </ligand>
</feature>
<feature type="binding site" evidence="1">
    <location>
        <position position="126"/>
    </location>
    <ligand>
        <name>4-amino-2-methyl-5-(diphosphooxymethyl)pyrimidine</name>
        <dbReference type="ChEBI" id="CHEBI:57841"/>
    </ligand>
</feature>
<feature type="binding site" evidence="1">
    <location>
        <begin position="152"/>
        <end position="154"/>
    </location>
    <ligand>
        <name>2-[(2R,5Z)-2-carboxy-4-methylthiazol-5(2H)-ylidene]ethyl phosphate</name>
        <dbReference type="ChEBI" id="CHEBI:62899"/>
    </ligand>
</feature>
<feature type="binding site" evidence="1">
    <location>
        <position position="155"/>
    </location>
    <ligand>
        <name>4-amino-2-methyl-5-(diphosphooxymethyl)pyrimidine</name>
        <dbReference type="ChEBI" id="CHEBI:57841"/>
    </ligand>
</feature>
<feature type="binding site" evidence="1">
    <location>
        <position position="183"/>
    </location>
    <ligand>
        <name>2-[(2R,5Z)-2-carboxy-4-methylthiazol-5(2H)-ylidene]ethyl phosphate</name>
        <dbReference type="ChEBI" id="CHEBI:62899"/>
    </ligand>
</feature>
<evidence type="ECO:0000255" key="1">
    <source>
        <dbReference type="HAMAP-Rule" id="MF_00097"/>
    </source>
</evidence>
<organism>
    <name type="scientific">Mycobacterium sp. (strain KMS)</name>
    <dbReference type="NCBI Taxonomy" id="189918"/>
    <lineage>
        <taxon>Bacteria</taxon>
        <taxon>Bacillati</taxon>
        <taxon>Actinomycetota</taxon>
        <taxon>Actinomycetes</taxon>
        <taxon>Mycobacteriales</taxon>
        <taxon>Mycobacteriaceae</taxon>
        <taxon>Mycobacterium</taxon>
    </lineage>
</organism>
<reference key="1">
    <citation type="submission" date="2006-12" db="EMBL/GenBank/DDBJ databases">
        <title>Complete sequence of chromosome of Mycobacterium sp. KMS.</title>
        <authorList>
            <consortium name="US DOE Joint Genome Institute"/>
            <person name="Copeland A."/>
            <person name="Lucas S."/>
            <person name="Lapidus A."/>
            <person name="Barry K."/>
            <person name="Detter J.C."/>
            <person name="Glavina del Rio T."/>
            <person name="Hammon N."/>
            <person name="Israni S."/>
            <person name="Dalin E."/>
            <person name="Tice H."/>
            <person name="Pitluck S."/>
            <person name="Kiss H."/>
            <person name="Brettin T."/>
            <person name="Bruce D."/>
            <person name="Han C."/>
            <person name="Tapia R."/>
            <person name="Gilna P."/>
            <person name="Schmutz J."/>
            <person name="Larimer F."/>
            <person name="Land M."/>
            <person name="Hauser L."/>
            <person name="Kyrpides N."/>
            <person name="Mikhailova N."/>
            <person name="Miller C.D."/>
            <person name="Richardson P."/>
        </authorList>
    </citation>
    <scope>NUCLEOTIDE SEQUENCE [LARGE SCALE GENOMIC DNA]</scope>
    <source>
        <strain>KMS</strain>
    </source>
</reference>
<name>THIE_MYCSK</name>
<keyword id="KW-0460">Magnesium</keyword>
<keyword id="KW-0479">Metal-binding</keyword>
<keyword id="KW-0784">Thiamine biosynthesis</keyword>
<keyword id="KW-0808">Transferase</keyword>